<comment type="function">
    <text evidence="1">Involved in the binding of tRNA to the ribosomes.</text>
</comment>
<comment type="subunit">
    <text evidence="1">Part of the 30S ribosomal subunit.</text>
</comment>
<comment type="similarity">
    <text evidence="1">Belongs to the universal ribosomal protein uS10 family.</text>
</comment>
<name>RS10_RUEST</name>
<organism>
    <name type="scientific">Ruegeria sp. (strain TM1040)</name>
    <name type="common">Silicibacter sp.</name>
    <dbReference type="NCBI Taxonomy" id="292414"/>
    <lineage>
        <taxon>Bacteria</taxon>
        <taxon>Pseudomonadati</taxon>
        <taxon>Pseudomonadota</taxon>
        <taxon>Alphaproteobacteria</taxon>
        <taxon>Rhodobacterales</taxon>
        <taxon>Roseobacteraceae</taxon>
        <taxon>Ruegeria</taxon>
    </lineage>
</organism>
<protein>
    <recommendedName>
        <fullName evidence="1">Small ribosomal subunit protein uS10</fullName>
    </recommendedName>
    <alternativeName>
        <fullName evidence="2">30S ribosomal protein S10</fullName>
    </alternativeName>
</protein>
<feature type="chain" id="PRO_0000258573" description="Small ribosomal subunit protein uS10">
    <location>
        <begin position="1"/>
        <end position="104"/>
    </location>
</feature>
<keyword id="KW-1185">Reference proteome</keyword>
<keyword id="KW-0687">Ribonucleoprotein</keyword>
<keyword id="KW-0689">Ribosomal protein</keyword>
<sequence>MQSQNIRIRLKAFDYRVLDASTQEIVNTAKRTGAQVRGPIPLPNKIEKFTVLRGPHVDKKSRDQFEIRTHKRLLDIVDPTPQTVDALMKLDLAAGVDVEIKLQS</sequence>
<evidence type="ECO:0000255" key="1">
    <source>
        <dbReference type="HAMAP-Rule" id="MF_00508"/>
    </source>
</evidence>
<evidence type="ECO:0000305" key="2"/>
<proteinExistence type="inferred from homology"/>
<dbReference type="EMBL" id="CP000377">
    <property type="protein sequence ID" value="ABF62978.1"/>
    <property type="molecule type" value="Genomic_DNA"/>
</dbReference>
<dbReference type="RefSeq" id="WP_005621947.1">
    <property type="nucleotide sequence ID" value="NC_008044.1"/>
</dbReference>
<dbReference type="SMR" id="Q1GK38"/>
<dbReference type="STRING" id="292414.TM1040_0245"/>
<dbReference type="GeneID" id="28248356"/>
<dbReference type="KEGG" id="sit:TM1040_0245"/>
<dbReference type="eggNOG" id="COG0051">
    <property type="taxonomic scope" value="Bacteria"/>
</dbReference>
<dbReference type="HOGENOM" id="CLU_122625_1_3_5"/>
<dbReference type="OrthoDB" id="9804464at2"/>
<dbReference type="Proteomes" id="UP000000636">
    <property type="component" value="Chromosome"/>
</dbReference>
<dbReference type="GO" id="GO:1990904">
    <property type="term" value="C:ribonucleoprotein complex"/>
    <property type="evidence" value="ECO:0007669"/>
    <property type="project" value="UniProtKB-KW"/>
</dbReference>
<dbReference type="GO" id="GO:0005840">
    <property type="term" value="C:ribosome"/>
    <property type="evidence" value="ECO:0007669"/>
    <property type="project" value="UniProtKB-KW"/>
</dbReference>
<dbReference type="GO" id="GO:0003735">
    <property type="term" value="F:structural constituent of ribosome"/>
    <property type="evidence" value="ECO:0007669"/>
    <property type="project" value="InterPro"/>
</dbReference>
<dbReference type="GO" id="GO:0000049">
    <property type="term" value="F:tRNA binding"/>
    <property type="evidence" value="ECO:0007669"/>
    <property type="project" value="UniProtKB-UniRule"/>
</dbReference>
<dbReference type="GO" id="GO:0006412">
    <property type="term" value="P:translation"/>
    <property type="evidence" value="ECO:0007669"/>
    <property type="project" value="UniProtKB-UniRule"/>
</dbReference>
<dbReference type="FunFam" id="3.30.70.600:FF:000001">
    <property type="entry name" value="30S ribosomal protein S10"/>
    <property type="match status" value="1"/>
</dbReference>
<dbReference type="Gene3D" id="3.30.70.600">
    <property type="entry name" value="Ribosomal protein S10 domain"/>
    <property type="match status" value="1"/>
</dbReference>
<dbReference type="HAMAP" id="MF_00508">
    <property type="entry name" value="Ribosomal_uS10"/>
    <property type="match status" value="1"/>
</dbReference>
<dbReference type="InterPro" id="IPR001848">
    <property type="entry name" value="Ribosomal_uS10"/>
</dbReference>
<dbReference type="InterPro" id="IPR027486">
    <property type="entry name" value="Ribosomal_uS10_dom"/>
</dbReference>
<dbReference type="InterPro" id="IPR036838">
    <property type="entry name" value="Ribosomal_uS10_dom_sf"/>
</dbReference>
<dbReference type="NCBIfam" id="NF001861">
    <property type="entry name" value="PRK00596.1"/>
    <property type="match status" value="1"/>
</dbReference>
<dbReference type="NCBIfam" id="TIGR01049">
    <property type="entry name" value="rpsJ_bact"/>
    <property type="match status" value="1"/>
</dbReference>
<dbReference type="PANTHER" id="PTHR11700">
    <property type="entry name" value="30S RIBOSOMAL PROTEIN S10 FAMILY MEMBER"/>
    <property type="match status" value="1"/>
</dbReference>
<dbReference type="Pfam" id="PF00338">
    <property type="entry name" value="Ribosomal_S10"/>
    <property type="match status" value="1"/>
</dbReference>
<dbReference type="PRINTS" id="PR00971">
    <property type="entry name" value="RIBOSOMALS10"/>
</dbReference>
<dbReference type="SMART" id="SM01403">
    <property type="entry name" value="Ribosomal_S10"/>
    <property type="match status" value="1"/>
</dbReference>
<dbReference type="SUPFAM" id="SSF54999">
    <property type="entry name" value="Ribosomal protein S10"/>
    <property type="match status" value="1"/>
</dbReference>
<reference key="1">
    <citation type="submission" date="2006-05" db="EMBL/GenBank/DDBJ databases">
        <title>Complete sequence of chromosome of Silicibacter sp. TM1040.</title>
        <authorList>
            <consortium name="US DOE Joint Genome Institute"/>
            <person name="Copeland A."/>
            <person name="Lucas S."/>
            <person name="Lapidus A."/>
            <person name="Barry K."/>
            <person name="Detter J.C."/>
            <person name="Glavina del Rio T."/>
            <person name="Hammon N."/>
            <person name="Israni S."/>
            <person name="Dalin E."/>
            <person name="Tice H."/>
            <person name="Pitluck S."/>
            <person name="Brettin T."/>
            <person name="Bruce D."/>
            <person name="Han C."/>
            <person name="Tapia R."/>
            <person name="Goodwin L."/>
            <person name="Thompson L.S."/>
            <person name="Gilna P."/>
            <person name="Schmutz J."/>
            <person name="Larimer F."/>
            <person name="Land M."/>
            <person name="Hauser L."/>
            <person name="Kyrpides N."/>
            <person name="Kim E."/>
            <person name="Belas R."/>
            <person name="Moran M.A."/>
            <person name="Buchan A."/>
            <person name="Gonzalez J.M."/>
            <person name="Schell M.A."/>
            <person name="Sun F."/>
            <person name="Richardson P."/>
        </authorList>
    </citation>
    <scope>NUCLEOTIDE SEQUENCE [LARGE SCALE GENOMIC DNA]</scope>
    <source>
        <strain>TM1040</strain>
    </source>
</reference>
<accession>Q1GK38</accession>
<gene>
    <name evidence="1" type="primary">rpsJ</name>
    <name type="ordered locus">TM1040_0245</name>
</gene>